<accession>P85457</accession>
<accession>P85464</accession>
<name>FAR13_LUCCU</name>
<dbReference type="GO" id="GO:0005576">
    <property type="term" value="C:extracellular region"/>
    <property type="evidence" value="ECO:0007669"/>
    <property type="project" value="UniProtKB-SubCell"/>
</dbReference>
<dbReference type="GO" id="GO:0007218">
    <property type="term" value="P:neuropeptide signaling pathway"/>
    <property type="evidence" value="ECO:0007669"/>
    <property type="project" value="UniProtKB-KW"/>
</dbReference>
<comment type="subcellular location">
    <subcellularLocation>
        <location evidence="4">Secreted</location>
    </subcellularLocation>
</comment>
<comment type="tissue specificity">
    <text evidence="2">Detected in the thoracic perisympathetic organs in larvae, and the dorsal ganglionic sheath in adults (at protein level).</text>
</comment>
<comment type="mass spectrometry" mass="1097.52" method="MALDI" evidence="2"/>
<comment type="similarity">
    <text evidence="1">Belongs to the FARP (FMRFamide related peptide) family.</text>
</comment>
<keyword id="KW-0027">Amidation</keyword>
<keyword id="KW-0903">Direct protein sequencing</keyword>
<keyword id="KW-0527">Neuropeptide</keyword>
<keyword id="KW-0964">Secreted</keyword>
<organism>
    <name type="scientific">Lucilia cuprina</name>
    <name type="common">Green bottle fly</name>
    <name type="synonym">Australian sheep blowfly</name>
    <dbReference type="NCBI Taxonomy" id="7375"/>
    <lineage>
        <taxon>Eukaryota</taxon>
        <taxon>Metazoa</taxon>
        <taxon>Ecdysozoa</taxon>
        <taxon>Arthropoda</taxon>
        <taxon>Hexapoda</taxon>
        <taxon>Insecta</taxon>
        <taxon>Pterygota</taxon>
        <taxon>Neoptera</taxon>
        <taxon>Endopterygota</taxon>
        <taxon>Diptera</taxon>
        <taxon>Brachycera</taxon>
        <taxon>Muscomorpha</taxon>
        <taxon>Oestroidea</taxon>
        <taxon>Calliphoridae</taxon>
        <taxon>Luciliinae</taxon>
        <taxon>Lucilia</taxon>
    </lineage>
</organism>
<protein>
    <recommendedName>
        <fullName>FMRFamide-13</fullName>
    </recommendedName>
    <alternativeName>
        <fullName evidence="3">LucFMRFamide-13</fullName>
    </alternativeName>
</protein>
<evidence type="ECO:0000255" key="1"/>
<evidence type="ECO:0000269" key="2">
    <source>
    </source>
</evidence>
<evidence type="ECO:0000303" key="3">
    <source>
    </source>
</evidence>
<evidence type="ECO:0000305" key="4"/>
<sequence length="9" mass="1084">GPSQDFMRF</sequence>
<reference evidence="4" key="1">
    <citation type="journal article" date="2009" name="Gen. Comp. Endocrinol.">
        <title>Extended FMRFamides in dipteran insects: conservative expression in the neuroendocrine system is accompanied by rapid sequence evolution.</title>
        <authorList>
            <person name="Rahman M.M."/>
            <person name="Fromm B."/>
            <person name="Neupert S."/>
            <person name="Kreusch S."/>
            <person name="Predel R."/>
        </authorList>
    </citation>
    <scope>PROTEIN SEQUENCE</scope>
    <scope>TISSUE SPECIFICITY</scope>
    <scope>MASS SPECTROMETRY</scope>
    <scope>AMIDATION AT PHE-9</scope>
    <scope>VARIANT ALA-1</scope>
    <source>
        <strain evidence="2">Bangladesh</strain>
        <strain evidence="2">Goondiwindi</strain>
        <tissue evidence="2">Dorsal ganglionic sheath</tissue>
    </source>
</reference>
<feature type="peptide" id="PRO_0000371755" description="FMRFamide-13">
    <location>
        <begin position="1"/>
        <end position="9"/>
    </location>
</feature>
<feature type="modified residue" description="Phenylalanine amide" evidence="2">
    <location>
        <position position="9"/>
    </location>
</feature>
<feature type="sequence variant" description="In strain: Bangladesh." evidence="2">
    <original>G</original>
    <variation>A</variation>
    <location>
        <position position="1"/>
    </location>
</feature>
<proteinExistence type="evidence at protein level"/>